<reference key="1">
    <citation type="journal article" date="1991" name="Proc. Natl. Acad. Sci. U.S.A.">
        <title>Genes for two calcium-dependent cell adhesion molecules have similar structures and are arranged in tandem in the chicken genome.</title>
        <authorList>
            <person name="Sorkin B.C."/>
            <person name="Gallin W.J."/>
            <person name="Edelman G.M."/>
            <person name="Cunningham B.A."/>
        </authorList>
    </citation>
    <scope>NUCLEOTIDE SEQUENCE [GENOMIC DNA]</scope>
</reference>
<reference key="2">
    <citation type="journal article" date="1991" name="J. Cell Biol.">
        <title>Molecular cloning and characterization of B-cadherin, a novel chick cadherin.</title>
        <authorList>
            <person name="Napolitano E.W."/>
            <person name="Venstrom K."/>
            <person name="Wheeler E.F."/>
            <person name="Reichardt L.F."/>
        </authorList>
    </citation>
    <scope>NUCLEOTIDE SEQUENCE [MRNA] OF 7-732</scope>
    <source>
        <tissue>Embryonic brain</tissue>
    </source>
</reference>
<dbReference type="EMBL" id="M81894">
    <property type="protein sequence ID" value="AAA48929.1"/>
    <property type="molecule type" value="Genomic_DNA"/>
</dbReference>
<dbReference type="EMBL" id="X58518">
    <property type="protein sequence ID" value="CAA41408.1"/>
    <property type="molecule type" value="mRNA"/>
</dbReference>
<dbReference type="PIR" id="A41634">
    <property type="entry name" value="IJCHCB"/>
</dbReference>
<dbReference type="SMR" id="P33145"/>
<dbReference type="FunCoup" id="P33145">
    <property type="interactions" value="6"/>
</dbReference>
<dbReference type="GlyCosmos" id="P33145">
    <property type="glycosylation" value="2 sites, No reported glycans"/>
</dbReference>
<dbReference type="GlyGen" id="P33145">
    <property type="glycosylation" value="2 sites"/>
</dbReference>
<dbReference type="PaxDb" id="9031-ENSGALP00000000853"/>
<dbReference type="VEuPathDB" id="HostDB:geneid_414845"/>
<dbReference type="eggNOG" id="KOG3594">
    <property type="taxonomic scope" value="Eukaryota"/>
</dbReference>
<dbReference type="InParanoid" id="P33145"/>
<dbReference type="PhylomeDB" id="P33145"/>
<dbReference type="Proteomes" id="UP000000539">
    <property type="component" value="Unassembled WGS sequence"/>
</dbReference>
<dbReference type="GO" id="GO:0005912">
    <property type="term" value="C:adherens junction"/>
    <property type="evidence" value="ECO:0000318"/>
    <property type="project" value="GO_Central"/>
</dbReference>
<dbReference type="GO" id="GO:0016342">
    <property type="term" value="C:catenin complex"/>
    <property type="evidence" value="ECO:0000318"/>
    <property type="project" value="GO_Central"/>
</dbReference>
<dbReference type="GO" id="GO:0005737">
    <property type="term" value="C:cytoplasm"/>
    <property type="evidence" value="ECO:0000318"/>
    <property type="project" value="GO_Central"/>
</dbReference>
<dbReference type="GO" id="GO:0008013">
    <property type="term" value="F:beta-catenin binding"/>
    <property type="evidence" value="ECO:0000318"/>
    <property type="project" value="GO_Central"/>
</dbReference>
<dbReference type="GO" id="GO:0045296">
    <property type="term" value="F:cadherin binding"/>
    <property type="evidence" value="ECO:0000318"/>
    <property type="project" value="GO_Central"/>
</dbReference>
<dbReference type="GO" id="GO:0005509">
    <property type="term" value="F:calcium ion binding"/>
    <property type="evidence" value="ECO:0007669"/>
    <property type="project" value="InterPro"/>
</dbReference>
<dbReference type="GO" id="GO:0034332">
    <property type="term" value="P:adherens junction organization"/>
    <property type="evidence" value="ECO:0000318"/>
    <property type="project" value="GO_Central"/>
</dbReference>
<dbReference type="GO" id="GO:0016339">
    <property type="term" value="P:calcium-dependent cell-cell adhesion via plasma membrane cell adhesion molecules"/>
    <property type="evidence" value="ECO:0000318"/>
    <property type="project" value="GO_Central"/>
</dbReference>
<dbReference type="GO" id="GO:0016477">
    <property type="term" value="P:cell migration"/>
    <property type="evidence" value="ECO:0000318"/>
    <property type="project" value="GO_Central"/>
</dbReference>
<dbReference type="GO" id="GO:0000902">
    <property type="term" value="P:cell morphogenesis"/>
    <property type="evidence" value="ECO:0000318"/>
    <property type="project" value="GO_Central"/>
</dbReference>
<dbReference type="GO" id="GO:0044331">
    <property type="term" value="P:cell-cell adhesion mediated by cadherin"/>
    <property type="evidence" value="ECO:0000318"/>
    <property type="project" value="GO_Central"/>
</dbReference>
<dbReference type="GO" id="GO:0007043">
    <property type="term" value="P:cell-cell junction assembly"/>
    <property type="evidence" value="ECO:0000318"/>
    <property type="project" value="GO_Central"/>
</dbReference>
<dbReference type="GO" id="GO:0007156">
    <property type="term" value="P:homophilic cell adhesion via plasma membrane adhesion molecules"/>
    <property type="evidence" value="ECO:0007669"/>
    <property type="project" value="InterPro"/>
</dbReference>
<dbReference type="CDD" id="cd00031">
    <property type="entry name" value="CA_like"/>
    <property type="match status" value="1"/>
</dbReference>
<dbReference type="CDD" id="cd11304">
    <property type="entry name" value="Cadherin_repeat"/>
    <property type="match status" value="3"/>
</dbReference>
<dbReference type="FunFam" id="2.60.40.60:FF:000011">
    <property type="entry name" value="Cadherin 1"/>
    <property type="match status" value="1"/>
</dbReference>
<dbReference type="FunFam" id="2.60.40.60:FF:000019">
    <property type="entry name" value="Cadherin 2"/>
    <property type="match status" value="1"/>
</dbReference>
<dbReference type="FunFam" id="2.60.40.60:FF:000022">
    <property type="entry name" value="Cadherin 2"/>
    <property type="match status" value="1"/>
</dbReference>
<dbReference type="FunFam" id="2.60.40.60:FF:000027">
    <property type="entry name" value="Cadherin 2"/>
    <property type="match status" value="1"/>
</dbReference>
<dbReference type="FunFam" id="4.10.900.10:FF:000001">
    <property type="entry name" value="Cadherin 2"/>
    <property type="match status" value="1"/>
</dbReference>
<dbReference type="FunFam" id="2.60.40.60:FF:000031">
    <property type="entry name" value="Cadherin 3"/>
    <property type="match status" value="1"/>
</dbReference>
<dbReference type="Gene3D" id="2.60.40.60">
    <property type="entry name" value="Cadherins"/>
    <property type="match status" value="5"/>
</dbReference>
<dbReference type="Gene3D" id="4.10.900.10">
    <property type="entry name" value="TCF3-CBD (Catenin binding domain)"/>
    <property type="match status" value="1"/>
</dbReference>
<dbReference type="InterPro" id="IPR039808">
    <property type="entry name" value="Cadherin"/>
</dbReference>
<dbReference type="InterPro" id="IPR002126">
    <property type="entry name" value="Cadherin-like_dom"/>
</dbReference>
<dbReference type="InterPro" id="IPR015919">
    <property type="entry name" value="Cadherin-like_sf"/>
</dbReference>
<dbReference type="InterPro" id="IPR020894">
    <property type="entry name" value="Cadherin_CS"/>
</dbReference>
<dbReference type="InterPro" id="IPR000233">
    <property type="entry name" value="Cadherin_Y-type_LIR"/>
</dbReference>
<dbReference type="InterPro" id="IPR027397">
    <property type="entry name" value="Catenin-bd_sf"/>
</dbReference>
<dbReference type="PANTHER" id="PTHR24027">
    <property type="entry name" value="CADHERIN-23"/>
    <property type="match status" value="1"/>
</dbReference>
<dbReference type="PANTHER" id="PTHR24027:SF446">
    <property type="entry name" value="CADHERIN-3"/>
    <property type="match status" value="1"/>
</dbReference>
<dbReference type="Pfam" id="PF01049">
    <property type="entry name" value="CADH_Y-type_LIR"/>
    <property type="match status" value="1"/>
</dbReference>
<dbReference type="Pfam" id="PF00028">
    <property type="entry name" value="Cadherin"/>
    <property type="match status" value="5"/>
</dbReference>
<dbReference type="PRINTS" id="PR00205">
    <property type="entry name" value="CADHERIN"/>
</dbReference>
<dbReference type="SMART" id="SM00112">
    <property type="entry name" value="CA"/>
    <property type="match status" value="4"/>
</dbReference>
<dbReference type="SUPFAM" id="SSF49313">
    <property type="entry name" value="Cadherin-like"/>
    <property type="match status" value="5"/>
</dbReference>
<dbReference type="PROSITE" id="PS00232">
    <property type="entry name" value="CADHERIN_1"/>
    <property type="match status" value="3"/>
</dbReference>
<dbReference type="PROSITE" id="PS50268">
    <property type="entry name" value="CADHERIN_2"/>
    <property type="match status" value="5"/>
</dbReference>
<sequence length="732" mass="80613">LRRQKRDWVIPPIKVPENERGPFPKNLVQIKSNRDREAKIFYSITGQGADAPPEGIFTIEKETGWMKVTQPLDREHINKYHLYSHAVSENGKPVEEPMEIIVTVTDQNDNKPQFTQEVFRGSVPEGALPGTSVMRVNATDADDDVETYNGVIAYSILSQEPREPHPHMFTVNRATGTLSVIASGLDRERVREYTLTMQAADLDGQGLTTTALAVIEITDVNDNAPEFDPKTYEAAVPENEAELEVARLATTDLDEPHTPAWRAVYSIVRGNEGGAFTITTDPASNEGVLRTAKGLDYEAKRQFVLHVAVVNEAPFAIKLPTATATVMVSVEDVNEAPVFDPPLRLAQVPEDVPLGQPLASYTAQDPDRAQQQRIKYVMGSDPAGWLAVHPENGLITAREQLDRESPFTKNSTYMAVLLAVDDGLPPATGTGTLLLTLLDVNDHGPEPEPRDIVICNRSPVPQVLTITDRDLPPNTGPFRAELSHGSGDSWAVEVGNGGDTVALWLTEPLEQNLYSVYLRLFDRQGKDQVTVIRAQVCDCQGRVESCAQKPRVDTGVPIVLAVLGAVLALLLVLLLLLLLVRRRKVVKEPLLLPEDDTRDNIFYYGEEGGGEEDQDYDLSQLHRGLDARPEVIRNDVAPPLMAAPQYRPRPANPDEIGNFIDENLKAADTDPTAPPYDSLLVFDYEGGGSEATSLSSLNSSASDQDQDYDYLNEWGNRFKKLAELYGGGEDEE</sequence>
<organism>
    <name type="scientific">Gallus gallus</name>
    <name type="common">Chicken</name>
    <dbReference type="NCBI Taxonomy" id="9031"/>
    <lineage>
        <taxon>Eukaryota</taxon>
        <taxon>Metazoa</taxon>
        <taxon>Chordata</taxon>
        <taxon>Craniata</taxon>
        <taxon>Vertebrata</taxon>
        <taxon>Euteleostomi</taxon>
        <taxon>Archelosauria</taxon>
        <taxon>Archosauria</taxon>
        <taxon>Dinosauria</taxon>
        <taxon>Saurischia</taxon>
        <taxon>Theropoda</taxon>
        <taxon>Coelurosauria</taxon>
        <taxon>Aves</taxon>
        <taxon>Neognathae</taxon>
        <taxon>Galloanserae</taxon>
        <taxon>Galliformes</taxon>
        <taxon>Phasianidae</taxon>
        <taxon>Phasianinae</taxon>
        <taxon>Gallus</taxon>
    </lineage>
</organism>
<evidence type="ECO:0000250" key="1"/>
<evidence type="ECO:0000255" key="2"/>
<evidence type="ECO:0000255" key="3">
    <source>
        <dbReference type="PROSITE-ProRule" id="PRU00043"/>
    </source>
</evidence>
<evidence type="ECO:0000305" key="4"/>
<gene>
    <name type="primary">K-CAM</name>
</gene>
<protein>
    <recommendedName>
        <fullName>B-cadherin</fullName>
    </recommendedName>
    <alternativeName>
        <fullName>K-CAM protein</fullName>
    </alternativeName>
</protein>
<proteinExistence type="evidence at transcript level"/>
<name>CADHK_CHICK</name>
<feature type="propeptide" id="PRO_0000003831" evidence="2">
    <location>
        <begin position="1" status="less than"/>
        <end position="6"/>
    </location>
</feature>
<feature type="chain" id="PRO_0000003832" description="B-cadherin">
    <location>
        <begin position="7"/>
        <end position="732"/>
    </location>
</feature>
<feature type="topological domain" description="Extracellular" evidence="2">
    <location>
        <begin position="6"/>
        <end position="554"/>
    </location>
</feature>
<feature type="transmembrane region" description="Helical" evidence="2">
    <location>
        <begin position="555"/>
        <end position="580"/>
    </location>
</feature>
<feature type="topological domain" description="Cytoplasmic" evidence="2">
    <location>
        <begin position="581"/>
        <end position="732"/>
    </location>
</feature>
<feature type="domain" description="Cadherin 1" evidence="3">
    <location>
        <begin position="6"/>
        <end position="114"/>
    </location>
</feature>
<feature type="domain" description="Cadherin 2" evidence="3">
    <location>
        <begin position="115"/>
        <end position="227"/>
    </location>
</feature>
<feature type="domain" description="Cadherin 3" evidence="3">
    <location>
        <begin position="228"/>
        <end position="339"/>
    </location>
</feature>
<feature type="domain" description="Cadherin 4" evidence="3">
    <location>
        <begin position="340"/>
        <end position="443"/>
    </location>
</feature>
<feature type="domain" description="Cadherin 5" evidence="3">
    <location>
        <begin position="444"/>
        <end position="554"/>
    </location>
</feature>
<feature type="glycosylation site" description="N-linked (GlcNAc...) asparagine" evidence="2">
    <location>
        <position position="137"/>
    </location>
</feature>
<feature type="glycosylation site" description="N-linked (GlcNAc...) asparagine" evidence="2">
    <location>
        <position position="410"/>
    </location>
</feature>
<feature type="sequence conflict" description="In Ref. 2; CAA41408." evidence="4" ref="2">
    <original>M</original>
    <variation>V</variation>
    <location>
        <position position="414"/>
    </location>
</feature>
<feature type="non-terminal residue">
    <location>
        <position position="1"/>
    </location>
</feature>
<keyword id="KW-0106">Calcium</keyword>
<keyword id="KW-0130">Cell adhesion</keyword>
<keyword id="KW-1003">Cell membrane</keyword>
<keyword id="KW-0165">Cleavage on pair of basic residues</keyword>
<keyword id="KW-0325">Glycoprotein</keyword>
<keyword id="KW-0472">Membrane</keyword>
<keyword id="KW-0479">Metal-binding</keyword>
<keyword id="KW-1185">Reference proteome</keyword>
<keyword id="KW-0677">Repeat</keyword>
<keyword id="KW-0812">Transmembrane</keyword>
<keyword id="KW-1133">Transmembrane helix</keyword>
<comment type="function">
    <text>Cadherins are calcium-dependent cell adhesion proteins. They preferentially interact with themselves in a homophilic manner in connecting cells; cadherins may thus contribute to the sorting of heterogeneous cell types. B-cadherin may have important functions in neurogenesis, in at least some epithelia, and in embryogenesis.</text>
</comment>
<comment type="subcellular location">
    <subcellularLocation>
        <location>Cell membrane</location>
        <topology>Single-pass type I membrane protein</topology>
    </subcellularLocation>
</comment>
<comment type="tissue specificity">
    <text>Expressed in a wide variety of tissues.</text>
</comment>
<comment type="domain">
    <text evidence="1">Three calcium ions are usually bound at the interface of each cadherin domain and rigidify the connections, imparting a strong curvature to the full-length ectodomain.</text>
</comment>
<accession>P33145</accession>